<accession>Q1GYT6</accession>
<gene>
    <name evidence="1" type="primary">rpsP</name>
    <name type="ordered locus">Mfla_2334</name>
</gene>
<proteinExistence type="inferred from homology"/>
<feature type="chain" id="PRO_1000049289" description="Small ribosomal subunit protein bS16">
    <location>
        <begin position="1"/>
        <end position="82"/>
    </location>
</feature>
<protein>
    <recommendedName>
        <fullName evidence="1">Small ribosomal subunit protein bS16</fullName>
    </recommendedName>
    <alternativeName>
        <fullName evidence="2">30S ribosomal protein S16</fullName>
    </alternativeName>
</protein>
<organism>
    <name type="scientific">Methylobacillus flagellatus (strain ATCC 51484 / DSM 6875 / VKM B-1610 / KT)</name>
    <dbReference type="NCBI Taxonomy" id="265072"/>
    <lineage>
        <taxon>Bacteria</taxon>
        <taxon>Pseudomonadati</taxon>
        <taxon>Pseudomonadota</taxon>
        <taxon>Betaproteobacteria</taxon>
        <taxon>Nitrosomonadales</taxon>
        <taxon>Methylophilaceae</taxon>
        <taxon>Methylobacillus</taxon>
    </lineage>
</organism>
<reference key="1">
    <citation type="submission" date="2006-03" db="EMBL/GenBank/DDBJ databases">
        <title>Complete sequence of Methylobacillus flagellatus KT.</title>
        <authorList>
            <consortium name="US DOE Joint Genome Institute"/>
            <person name="Copeland A."/>
            <person name="Lucas S."/>
            <person name="Lapidus A."/>
            <person name="Barry K."/>
            <person name="Detter J.C."/>
            <person name="Glavina del Rio T."/>
            <person name="Hammon N."/>
            <person name="Israni S."/>
            <person name="Dalin E."/>
            <person name="Tice H."/>
            <person name="Pitluck S."/>
            <person name="Brettin T."/>
            <person name="Bruce D."/>
            <person name="Han C."/>
            <person name="Tapia R."/>
            <person name="Saunders E."/>
            <person name="Gilna P."/>
            <person name="Schmutz J."/>
            <person name="Larimer F."/>
            <person name="Land M."/>
            <person name="Kyrpides N."/>
            <person name="Anderson I."/>
            <person name="Richardson P."/>
        </authorList>
    </citation>
    <scope>NUCLEOTIDE SEQUENCE [LARGE SCALE GENOMIC DNA]</scope>
    <source>
        <strain>ATCC 51484 / DSM 6875 / VKM B-1610 / KT</strain>
    </source>
</reference>
<comment type="similarity">
    <text evidence="1">Belongs to the bacterial ribosomal protein bS16 family.</text>
</comment>
<keyword id="KW-1185">Reference proteome</keyword>
<keyword id="KW-0687">Ribonucleoprotein</keyword>
<keyword id="KW-0689">Ribosomal protein</keyword>
<dbReference type="EMBL" id="CP000284">
    <property type="protein sequence ID" value="ABE50601.1"/>
    <property type="molecule type" value="Genomic_DNA"/>
</dbReference>
<dbReference type="RefSeq" id="WP_011480554.1">
    <property type="nucleotide sequence ID" value="NC_007947.1"/>
</dbReference>
<dbReference type="SMR" id="Q1GYT6"/>
<dbReference type="STRING" id="265072.Mfla_2334"/>
<dbReference type="KEGG" id="mfa:Mfla_2334"/>
<dbReference type="eggNOG" id="COG0228">
    <property type="taxonomic scope" value="Bacteria"/>
</dbReference>
<dbReference type="HOGENOM" id="CLU_100590_5_1_4"/>
<dbReference type="Proteomes" id="UP000002440">
    <property type="component" value="Chromosome"/>
</dbReference>
<dbReference type="GO" id="GO:0005737">
    <property type="term" value="C:cytoplasm"/>
    <property type="evidence" value="ECO:0007669"/>
    <property type="project" value="UniProtKB-ARBA"/>
</dbReference>
<dbReference type="GO" id="GO:0015935">
    <property type="term" value="C:small ribosomal subunit"/>
    <property type="evidence" value="ECO:0007669"/>
    <property type="project" value="TreeGrafter"/>
</dbReference>
<dbReference type="GO" id="GO:0003735">
    <property type="term" value="F:structural constituent of ribosome"/>
    <property type="evidence" value="ECO:0007669"/>
    <property type="project" value="InterPro"/>
</dbReference>
<dbReference type="GO" id="GO:0006412">
    <property type="term" value="P:translation"/>
    <property type="evidence" value="ECO:0007669"/>
    <property type="project" value="UniProtKB-UniRule"/>
</dbReference>
<dbReference type="Gene3D" id="3.30.1320.10">
    <property type="match status" value="1"/>
</dbReference>
<dbReference type="HAMAP" id="MF_00385">
    <property type="entry name" value="Ribosomal_bS16"/>
    <property type="match status" value="1"/>
</dbReference>
<dbReference type="InterPro" id="IPR000307">
    <property type="entry name" value="Ribosomal_bS16"/>
</dbReference>
<dbReference type="InterPro" id="IPR020592">
    <property type="entry name" value="Ribosomal_bS16_CS"/>
</dbReference>
<dbReference type="InterPro" id="IPR023803">
    <property type="entry name" value="Ribosomal_bS16_dom_sf"/>
</dbReference>
<dbReference type="NCBIfam" id="TIGR00002">
    <property type="entry name" value="S16"/>
    <property type="match status" value="1"/>
</dbReference>
<dbReference type="PANTHER" id="PTHR12919">
    <property type="entry name" value="30S RIBOSOMAL PROTEIN S16"/>
    <property type="match status" value="1"/>
</dbReference>
<dbReference type="PANTHER" id="PTHR12919:SF20">
    <property type="entry name" value="SMALL RIBOSOMAL SUBUNIT PROTEIN BS16M"/>
    <property type="match status" value="1"/>
</dbReference>
<dbReference type="Pfam" id="PF00886">
    <property type="entry name" value="Ribosomal_S16"/>
    <property type="match status" value="1"/>
</dbReference>
<dbReference type="SUPFAM" id="SSF54565">
    <property type="entry name" value="Ribosomal protein S16"/>
    <property type="match status" value="1"/>
</dbReference>
<dbReference type="PROSITE" id="PS00732">
    <property type="entry name" value="RIBOSOMAL_S16"/>
    <property type="match status" value="1"/>
</dbReference>
<evidence type="ECO:0000255" key="1">
    <source>
        <dbReference type="HAMAP-Rule" id="MF_00385"/>
    </source>
</evidence>
<evidence type="ECO:0000305" key="2"/>
<sequence>MVIIRLARGGAKKTPFYSVVVADSRNRRDGRFIERVGFYNPLAKEGQEGLRLNNERIAHWRDNGAQLSDTVARLVKQAQKSA</sequence>
<name>RS16_METFK</name>